<protein>
    <recommendedName>
        <fullName evidence="1">Urease accessory protein UreG</fullName>
    </recommendedName>
</protein>
<proteinExistence type="inferred from homology"/>
<organism>
    <name type="scientific">Paracoccus denitrificans (strain Pd 1222)</name>
    <dbReference type="NCBI Taxonomy" id="318586"/>
    <lineage>
        <taxon>Bacteria</taxon>
        <taxon>Pseudomonadati</taxon>
        <taxon>Pseudomonadota</taxon>
        <taxon>Alphaproteobacteria</taxon>
        <taxon>Rhodobacterales</taxon>
        <taxon>Paracoccaceae</taxon>
        <taxon>Paracoccus</taxon>
    </lineage>
</organism>
<sequence length="211" mass="21963">MSNGPLRVGIGGPVGAGKTTLTEQIARALAPRLSMAVITNDIYTREDAEALMRAQVLPSERIRGVETGGCPHTAIREDASINLAAIAELNAAFPDLDLVLIESGGDNLAATFSPELADLTIYVIDTAAGQDIPRKRGPGLARSDLLVVNKTDLAPHVGVDAALLEADARASRAGRPVVMAALRHGKGVAEVVDFLIEQGGLQPCPAHSHGQ</sequence>
<name>UREG_PARDP</name>
<accession>A1B1B6</accession>
<gene>
    <name evidence="1" type="primary">ureG</name>
    <name type="ordered locus">Pden_1205</name>
</gene>
<evidence type="ECO:0000255" key="1">
    <source>
        <dbReference type="HAMAP-Rule" id="MF_01389"/>
    </source>
</evidence>
<comment type="function">
    <text evidence="1">Facilitates the functional incorporation of the urease nickel metallocenter. This process requires GTP hydrolysis, probably effectuated by UreG.</text>
</comment>
<comment type="subunit">
    <text evidence="1">Homodimer. UreD, UreF and UreG form a complex that acts as a GTP-hydrolysis-dependent molecular chaperone, activating the urease apoprotein by helping to assemble the nickel containing metallocenter of UreC. The UreE protein probably delivers the nickel.</text>
</comment>
<comment type="subcellular location">
    <subcellularLocation>
        <location evidence="1">Cytoplasm</location>
    </subcellularLocation>
</comment>
<comment type="similarity">
    <text evidence="1">Belongs to the SIMIBI class G3E GTPase family. UreG subfamily.</text>
</comment>
<reference key="1">
    <citation type="submission" date="2006-12" db="EMBL/GenBank/DDBJ databases">
        <title>Complete sequence of chromosome 1 of Paracoccus denitrificans PD1222.</title>
        <authorList>
            <person name="Copeland A."/>
            <person name="Lucas S."/>
            <person name="Lapidus A."/>
            <person name="Barry K."/>
            <person name="Detter J.C."/>
            <person name="Glavina del Rio T."/>
            <person name="Hammon N."/>
            <person name="Israni S."/>
            <person name="Dalin E."/>
            <person name="Tice H."/>
            <person name="Pitluck S."/>
            <person name="Munk A.C."/>
            <person name="Brettin T."/>
            <person name="Bruce D."/>
            <person name="Han C."/>
            <person name="Tapia R."/>
            <person name="Gilna P."/>
            <person name="Schmutz J."/>
            <person name="Larimer F."/>
            <person name="Land M."/>
            <person name="Hauser L."/>
            <person name="Kyrpides N."/>
            <person name="Lykidis A."/>
            <person name="Spiro S."/>
            <person name="Richardson D.J."/>
            <person name="Moir J.W.B."/>
            <person name="Ferguson S.J."/>
            <person name="van Spanning R.J.M."/>
            <person name="Richardson P."/>
        </authorList>
    </citation>
    <scope>NUCLEOTIDE SEQUENCE [LARGE SCALE GENOMIC DNA]</scope>
    <source>
        <strain>Pd 1222</strain>
    </source>
</reference>
<dbReference type="EMBL" id="CP000489">
    <property type="protein sequence ID" value="ABL69310.1"/>
    <property type="molecule type" value="Genomic_DNA"/>
</dbReference>
<dbReference type="RefSeq" id="WP_011747528.1">
    <property type="nucleotide sequence ID" value="NC_008686.1"/>
</dbReference>
<dbReference type="SMR" id="A1B1B6"/>
<dbReference type="STRING" id="318586.Pden_1205"/>
<dbReference type="EnsemblBacteria" id="ABL69310">
    <property type="protein sequence ID" value="ABL69310"/>
    <property type="gene ID" value="Pden_1205"/>
</dbReference>
<dbReference type="GeneID" id="93452421"/>
<dbReference type="KEGG" id="pde:Pden_1205"/>
<dbReference type="eggNOG" id="COG0378">
    <property type="taxonomic scope" value="Bacteria"/>
</dbReference>
<dbReference type="HOGENOM" id="CLU_072144_1_0_5"/>
<dbReference type="OrthoDB" id="9802035at2"/>
<dbReference type="Proteomes" id="UP000000361">
    <property type="component" value="Chromosome 1"/>
</dbReference>
<dbReference type="GO" id="GO:0005737">
    <property type="term" value="C:cytoplasm"/>
    <property type="evidence" value="ECO:0007669"/>
    <property type="project" value="UniProtKB-SubCell"/>
</dbReference>
<dbReference type="GO" id="GO:0005525">
    <property type="term" value="F:GTP binding"/>
    <property type="evidence" value="ECO:0007669"/>
    <property type="project" value="UniProtKB-KW"/>
</dbReference>
<dbReference type="GO" id="GO:0003924">
    <property type="term" value="F:GTPase activity"/>
    <property type="evidence" value="ECO:0007669"/>
    <property type="project" value="InterPro"/>
</dbReference>
<dbReference type="GO" id="GO:0016151">
    <property type="term" value="F:nickel cation binding"/>
    <property type="evidence" value="ECO:0007669"/>
    <property type="project" value="UniProtKB-UniRule"/>
</dbReference>
<dbReference type="GO" id="GO:0043419">
    <property type="term" value="P:urea catabolic process"/>
    <property type="evidence" value="ECO:0007669"/>
    <property type="project" value="InterPro"/>
</dbReference>
<dbReference type="CDD" id="cd05540">
    <property type="entry name" value="UreG"/>
    <property type="match status" value="1"/>
</dbReference>
<dbReference type="Gene3D" id="3.40.50.300">
    <property type="entry name" value="P-loop containing nucleotide triphosphate hydrolases"/>
    <property type="match status" value="1"/>
</dbReference>
<dbReference type="HAMAP" id="MF_01389">
    <property type="entry name" value="UreG"/>
    <property type="match status" value="1"/>
</dbReference>
<dbReference type="InterPro" id="IPR003495">
    <property type="entry name" value="CobW/HypB/UreG_nucleotide-bd"/>
</dbReference>
<dbReference type="InterPro" id="IPR027417">
    <property type="entry name" value="P-loop_NTPase"/>
</dbReference>
<dbReference type="InterPro" id="IPR004400">
    <property type="entry name" value="UreG"/>
</dbReference>
<dbReference type="NCBIfam" id="TIGR00101">
    <property type="entry name" value="ureG"/>
    <property type="match status" value="1"/>
</dbReference>
<dbReference type="PANTHER" id="PTHR31715">
    <property type="entry name" value="UREASE ACCESSORY PROTEIN G"/>
    <property type="match status" value="1"/>
</dbReference>
<dbReference type="PANTHER" id="PTHR31715:SF0">
    <property type="entry name" value="UREASE ACCESSORY PROTEIN G"/>
    <property type="match status" value="1"/>
</dbReference>
<dbReference type="Pfam" id="PF02492">
    <property type="entry name" value="cobW"/>
    <property type="match status" value="1"/>
</dbReference>
<dbReference type="PIRSF" id="PIRSF005624">
    <property type="entry name" value="Ni-bind_GTPase"/>
    <property type="match status" value="1"/>
</dbReference>
<dbReference type="SUPFAM" id="SSF52540">
    <property type="entry name" value="P-loop containing nucleoside triphosphate hydrolases"/>
    <property type="match status" value="1"/>
</dbReference>
<keyword id="KW-0143">Chaperone</keyword>
<keyword id="KW-0963">Cytoplasm</keyword>
<keyword id="KW-0342">GTP-binding</keyword>
<keyword id="KW-0996">Nickel insertion</keyword>
<keyword id="KW-0547">Nucleotide-binding</keyword>
<keyword id="KW-1185">Reference proteome</keyword>
<feature type="chain" id="PRO_0000347411" description="Urease accessory protein UreG">
    <location>
        <begin position="1"/>
        <end position="211"/>
    </location>
</feature>
<feature type="binding site" evidence="1">
    <location>
        <begin position="12"/>
        <end position="19"/>
    </location>
    <ligand>
        <name>GTP</name>
        <dbReference type="ChEBI" id="CHEBI:37565"/>
    </ligand>
</feature>